<comment type="function">
    <text evidence="1">Master enzyme that delivers sulfur to a number of partners involved in Fe-S cluster assembly, tRNA modification or cofactor biosynthesis. Catalyzes the removal of elemental sulfur and selenium atoms from cysteine and selenocysteine to produce alanine. Functions as a sulfur delivery protein for Fe-S cluster synthesis onto IscU, an Fe-S scaffold assembly protein, as well as other S acceptor proteins. Also functions as a selenium delivery protein in the pathway for the biosynthesis of selenophosphate.</text>
</comment>
<comment type="catalytic activity">
    <reaction evidence="1">
        <text>(sulfur carrier)-H + L-cysteine = (sulfur carrier)-SH + L-alanine</text>
        <dbReference type="Rhea" id="RHEA:43892"/>
        <dbReference type="Rhea" id="RHEA-COMP:14737"/>
        <dbReference type="Rhea" id="RHEA-COMP:14739"/>
        <dbReference type="ChEBI" id="CHEBI:29917"/>
        <dbReference type="ChEBI" id="CHEBI:35235"/>
        <dbReference type="ChEBI" id="CHEBI:57972"/>
        <dbReference type="ChEBI" id="CHEBI:64428"/>
        <dbReference type="EC" id="2.8.1.7"/>
    </reaction>
</comment>
<comment type="cofactor">
    <cofactor evidence="1">
        <name>pyridoxal 5'-phosphate</name>
        <dbReference type="ChEBI" id="CHEBI:597326"/>
    </cofactor>
</comment>
<comment type="pathway">
    <text evidence="1">Cofactor biosynthesis; iron-sulfur cluster biosynthesis.</text>
</comment>
<comment type="subunit">
    <text evidence="1">Homodimer. Forms a heterotetramer with IscU, interacts with other sulfur acceptors.</text>
</comment>
<comment type="subcellular location">
    <subcellularLocation>
        <location evidence="1">Cytoplasm</location>
    </subcellularLocation>
</comment>
<comment type="similarity">
    <text evidence="1">Belongs to the class-V pyridoxal-phosphate-dependent aminotransferase family. NifS/IscS subfamily.</text>
</comment>
<proteinExistence type="inferred from homology"/>
<organism>
    <name type="scientific">Escherichia coli (strain SMS-3-5 / SECEC)</name>
    <dbReference type="NCBI Taxonomy" id="439855"/>
    <lineage>
        <taxon>Bacteria</taxon>
        <taxon>Pseudomonadati</taxon>
        <taxon>Pseudomonadota</taxon>
        <taxon>Gammaproteobacteria</taxon>
        <taxon>Enterobacterales</taxon>
        <taxon>Enterobacteriaceae</taxon>
        <taxon>Escherichia</taxon>
    </lineage>
</organism>
<name>ISCS_ECOSM</name>
<sequence length="404" mass="45090">MKLPIYLDYSATTPVDPRVAEKMMQFMTMDGTFGNPASRSHRFGWQAEEAVDIARNQIADLVGADPREIVFTSGATESDNLAIKGAANFYQKKGKHIITSKTEHKAVLDTCRQLEREGFEVTYLAPQRNGIIDLKELEAAMRDDTILVSIMHVNNEIGVVQDIAAIGEMCRARGIIYHVDATQSVGKLPIDLSQLKVDLMSFSGHKIYGPKGIGALYVRRKPRVRIEAQMHGGGHERGMRSGTLPVHQIVGMGEAYRIAKEEMATEMERLRGLRNRLWNGIKDIEEVYLNGDLEHGAPNILNVSFNYVEGESLIMALKDLAVSSGSACTSASLEPSYVLRALGLNDELAHSSIRFSLGRFTTEEEIDYTIELVRKSIGRLRDLSPLWEMYKQGVDLNSIEWAHH</sequence>
<feature type="chain" id="PRO_1000119628" description="Cysteine desulfurase IscS">
    <location>
        <begin position="1"/>
        <end position="404"/>
    </location>
</feature>
<feature type="active site" description="Cysteine persulfide intermediate" evidence="1">
    <location>
        <position position="328"/>
    </location>
</feature>
<feature type="binding site" evidence="1">
    <location>
        <begin position="75"/>
        <end position="76"/>
    </location>
    <ligand>
        <name>pyridoxal 5'-phosphate</name>
        <dbReference type="ChEBI" id="CHEBI:597326"/>
    </ligand>
</feature>
<feature type="binding site" evidence="1">
    <location>
        <position position="155"/>
    </location>
    <ligand>
        <name>pyridoxal 5'-phosphate</name>
        <dbReference type="ChEBI" id="CHEBI:597326"/>
    </ligand>
</feature>
<feature type="binding site" evidence="1">
    <location>
        <position position="183"/>
    </location>
    <ligand>
        <name>pyridoxal 5'-phosphate</name>
        <dbReference type="ChEBI" id="CHEBI:597326"/>
    </ligand>
</feature>
<feature type="binding site" evidence="1">
    <location>
        <begin position="203"/>
        <end position="205"/>
    </location>
    <ligand>
        <name>pyridoxal 5'-phosphate</name>
        <dbReference type="ChEBI" id="CHEBI:597326"/>
    </ligand>
</feature>
<feature type="binding site" evidence="1">
    <location>
        <position position="243"/>
    </location>
    <ligand>
        <name>pyridoxal 5'-phosphate</name>
        <dbReference type="ChEBI" id="CHEBI:597326"/>
    </ligand>
</feature>
<feature type="binding site" description="via persulfide group" evidence="1">
    <location>
        <position position="328"/>
    </location>
    <ligand>
        <name>[2Fe-2S] cluster</name>
        <dbReference type="ChEBI" id="CHEBI:190135"/>
        <note>ligand shared with IscU</note>
    </ligand>
</feature>
<feature type="modified residue" description="N6-(pyridoxal phosphate)lysine" evidence="1">
    <location>
        <position position="206"/>
    </location>
</feature>
<keyword id="KW-0001">2Fe-2S</keyword>
<keyword id="KW-0963">Cytoplasm</keyword>
<keyword id="KW-0408">Iron</keyword>
<keyword id="KW-0411">Iron-sulfur</keyword>
<keyword id="KW-0479">Metal-binding</keyword>
<keyword id="KW-0663">Pyridoxal phosphate</keyword>
<keyword id="KW-0808">Transferase</keyword>
<accession>B1LNI6</accession>
<dbReference type="EC" id="2.8.1.7" evidence="1"/>
<dbReference type="EMBL" id="CP000970">
    <property type="protein sequence ID" value="ACB18360.1"/>
    <property type="molecule type" value="Genomic_DNA"/>
</dbReference>
<dbReference type="RefSeq" id="WP_001295373.1">
    <property type="nucleotide sequence ID" value="NC_010498.1"/>
</dbReference>
<dbReference type="SMR" id="B1LNI6"/>
<dbReference type="GeneID" id="93774606"/>
<dbReference type="KEGG" id="ecm:EcSMS35_2683"/>
<dbReference type="HOGENOM" id="CLU_003433_0_2_6"/>
<dbReference type="UniPathway" id="UPA00266"/>
<dbReference type="Proteomes" id="UP000007011">
    <property type="component" value="Chromosome"/>
</dbReference>
<dbReference type="GO" id="GO:1990221">
    <property type="term" value="C:L-cysteine desulfurase complex"/>
    <property type="evidence" value="ECO:0007669"/>
    <property type="project" value="UniProtKB-ARBA"/>
</dbReference>
<dbReference type="GO" id="GO:0051537">
    <property type="term" value="F:2 iron, 2 sulfur cluster binding"/>
    <property type="evidence" value="ECO:0007669"/>
    <property type="project" value="UniProtKB-UniRule"/>
</dbReference>
<dbReference type="GO" id="GO:0031071">
    <property type="term" value="F:cysteine desulfurase activity"/>
    <property type="evidence" value="ECO:0007669"/>
    <property type="project" value="UniProtKB-UniRule"/>
</dbReference>
<dbReference type="GO" id="GO:0046872">
    <property type="term" value="F:metal ion binding"/>
    <property type="evidence" value="ECO:0007669"/>
    <property type="project" value="UniProtKB-KW"/>
</dbReference>
<dbReference type="GO" id="GO:0030170">
    <property type="term" value="F:pyridoxal phosphate binding"/>
    <property type="evidence" value="ECO:0007669"/>
    <property type="project" value="UniProtKB-UniRule"/>
</dbReference>
<dbReference type="GO" id="GO:0044571">
    <property type="term" value="P:[2Fe-2S] cluster assembly"/>
    <property type="evidence" value="ECO:0007669"/>
    <property type="project" value="UniProtKB-UniRule"/>
</dbReference>
<dbReference type="FunFam" id="3.40.640.10:FF:000003">
    <property type="entry name" value="Cysteine desulfurase IscS"/>
    <property type="match status" value="1"/>
</dbReference>
<dbReference type="FunFam" id="3.90.1150.10:FF:000002">
    <property type="entry name" value="Cysteine desulfurase IscS"/>
    <property type="match status" value="1"/>
</dbReference>
<dbReference type="Gene3D" id="3.90.1150.10">
    <property type="entry name" value="Aspartate Aminotransferase, domain 1"/>
    <property type="match status" value="1"/>
</dbReference>
<dbReference type="Gene3D" id="3.40.640.10">
    <property type="entry name" value="Type I PLP-dependent aspartate aminotransferase-like (Major domain)"/>
    <property type="match status" value="1"/>
</dbReference>
<dbReference type="HAMAP" id="MF_00331">
    <property type="entry name" value="Cys_desulf_IscS"/>
    <property type="match status" value="1"/>
</dbReference>
<dbReference type="InterPro" id="IPR000192">
    <property type="entry name" value="Aminotrans_V_dom"/>
</dbReference>
<dbReference type="InterPro" id="IPR020578">
    <property type="entry name" value="Aminotrans_V_PyrdxlP_BS"/>
</dbReference>
<dbReference type="InterPro" id="IPR010240">
    <property type="entry name" value="Cys_deSase_IscS"/>
</dbReference>
<dbReference type="InterPro" id="IPR016454">
    <property type="entry name" value="Cysteine_dSase"/>
</dbReference>
<dbReference type="InterPro" id="IPR015424">
    <property type="entry name" value="PyrdxlP-dep_Trfase"/>
</dbReference>
<dbReference type="InterPro" id="IPR015421">
    <property type="entry name" value="PyrdxlP-dep_Trfase_major"/>
</dbReference>
<dbReference type="InterPro" id="IPR015422">
    <property type="entry name" value="PyrdxlP-dep_Trfase_small"/>
</dbReference>
<dbReference type="NCBIfam" id="TIGR02006">
    <property type="entry name" value="IscS"/>
    <property type="match status" value="1"/>
</dbReference>
<dbReference type="NCBIfam" id="NF002806">
    <property type="entry name" value="PRK02948.1"/>
    <property type="match status" value="1"/>
</dbReference>
<dbReference type="NCBIfam" id="NF010611">
    <property type="entry name" value="PRK14012.1"/>
    <property type="match status" value="1"/>
</dbReference>
<dbReference type="PANTHER" id="PTHR11601:SF34">
    <property type="entry name" value="CYSTEINE DESULFURASE"/>
    <property type="match status" value="1"/>
</dbReference>
<dbReference type="PANTHER" id="PTHR11601">
    <property type="entry name" value="CYSTEINE DESULFURYLASE FAMILY MEMBER"/>
    <property type="match status" value="1"/>
</dbReference>
<dbReference type="Pfam" id="PF00266">
    <property type="entry name" value="Aminotran_5"/>
    <property type="match status" value="1"/>
</dbReference>
<dbReference type="PIRSF" id="PIRSF005572">
    <property type="entry name" value="NifS"/>
    <property type="match status" value="1"/>
</dbReference>
<dbReference type="SUPFAM" id="SSF53383">
    <property type="entry name" value="PLP-dependent transferases"/>
    <property type="match status" value="1"/>
</dbReference>
<dbReference type="PROSITE" id="PS00595">
    <property type="entry name" value="AA_TRANSFER_CLASS_5"/>
    <property type="match status" value="1"/>
</dbReference>
<protein>
    <recommendedName>
        <fullName evidence="1">Cysteine desulfurase IscS</fullName>
        <ecNumber evidence="1">2.8.1.7</ecNumber>
    </recommendedName>
</protein>
<evidence type="ECO:0000255" key="1">
    <source>
        <dbReference type="HAMAP-Rule" id="MF_00331"/>
    </source>
</evidence>
<reference key="1">
    <citation type="journal article" date="2008" name="J. Bacteriol.">
        <title>Insights into the environmental resistance gene pool from the genome sequence of the multidrug-resistant environmental isolate Escherichia coli SMS-3-5.</title>
        <authorList>
            <person name="Fricke W.F."/>
            <person name="Wright M.S."/>
            <person name="Lindell A.H."/>
            <person name="Harkins D.M."/>
            <person name="Baker-Austin C."/>
            <person name="Ravel J."/>
            <person name="Stepanauskas R."/>
        </authorList>
    </citation>
    <scope>NUCLEOTIDE SEQUENCE [LARGE SCALE GENOMIC DNA]</scope>
    <source>
        <strain>SMS-3-5 / SECEC</strain>
    </source>
</reference>
<gene>
    <name evidence="1" type="primary">iscS</name>
    <name type="ordered locus">EcSMS35_2683</name>
</gene>